<sequence>MAKLHDYYKSSVVAELTKQFGYTSVMQVPRIEKITLNMGVGDAINDKKLLENAAADMATISGQKPLITKARKSVAGFKIREGYPIGCKVTLRGERMWDFMERLISIALPRVRDFRGVNAKSFDGRGNYSMGVREQIIFPEIDFDKVDRVRGLDITITTSAGTDEEGRALLAAFNFPFRK</sequence>
<comment type="function">
    <text evidence="1">This is one of the proteins that bind and probably mediate the attachment of the 5S RNA into the large ribosomal subunit, where it forms part of the central protuberance. In the 70S ribosome it contacts protein S13 of the 30S subunit (bridge B1b), connecting the 2 subunits; this bridge is implicated in subunit movement. Contacts the P site tRNA; the 5S rRNA and some of its associated proteins might help stabilize positioning of ribosome-bound tRNAs.</text>
</comment>
<comment type="subunit">
    <text evidence="1">Part of the 50S ribosomal subunit; part of the 5S rRNA/L5/L18/L25 subcomplex. Contacts the 5S rRNA and the P site tRNA. Forms a bridge to the 30S subunit in the 70S ribosome.</text>
</comment>
<comment type="similarity">
    <text evidence="1">Belongs to the universal ribosomal protein uL5 family.</text>
</comment>
<reference key="1">
    <citation type="submission" date="2002-12" db="EMBL/GenBank/DDBJ databases">
        <title>Complete genome sequence of Vibrio vulnificus CMCP6.</title>
        <authorList>
            <person name="Rhee J.H."/>
            <person name="Kim S.Y."/>
            <person name="Chung S.S."/>
            <person name="Kim J.J."/>
            <person name="Moon Y.H."/>
            <person name="Jeong H."/>
            <person name="Choy H.E."/>
        </authorList>
    </citation>
    <scope>NUCLEOTIDE SEQUENCE [LARGE SCALE GENOMIC DNA]</scope>
    <source>
        <strain>CMCP6</strain>
    </source>
</reference>
<reference key="2">
    <citation type="journal article" date="2011" name="Mol. Syst. Biol.">
        <title>Integrative genome-scale metabolic analysis of Vibrio vulnificus for drug targeting and discovery.</title>
        <authorList>
            <person name="Kim H.U."/>
            <person name="Kim S.Y."/>
            <person name="Jeong H."/>
            <person name="Kim T.Y."/>
            <person name="Kim J.J."/>
            <person name="Choy H.E."/>
            <person name="Yi K.Y."/>
            <person name="Rhee J.H."/>
            <person name="Lee S.Y."/>
        </authorList>
    </citation>
    <scope>SEQUENCE REVISION</scope>
    <source>
        <strain>CMCP6</strain>
    </source>
</reference>
<name>RL5_VIBVU</name>
<protein>
    <recommendedName>
        <fullName evidence="1">Large ribosomal subunit protein uL5</fullName>
    </recommendedName>
    <alternativeName>
        <fullName evidence="2">50S ribosomal protein L5</fullName>
    </alternativeName>
</protein>
<feature type="chain" id="PRO_0000125024" description="Large ribosomal subunit protein uL5">
    <location>
        <begin position="1"/>
        <end position="179"/>
    </location>
</feature>
<keyword id="KW-0687">Ribonucleoprotein</keyword>
<keyword id="KW-0689">Ribosomal protein</keyword>
<keyword id="KW-0694">RNA-binding</keyword>
<keyword id="KW-0699">rRNA-binding</keyword>
<keyword id="KW-0820">tRNA-binding</keyword>
<evidence type="ECO:0000255" key="1">
    <source>
        <dbReference type="HAMAP-Rule" id="MF_01333"/>
    </source>
</evidence>
<evidence type="ECO:0000305" key="2"/>
<organism>
    <name type="scientific">Vibrio vulnificus (strain CMCP6)</name>
    <dbReference type="NCBI Taxonomy" id="216895"/>
    <lineage>
        <taxon>Bacteria</taxon>
        <taxon>Pseudomonadati</taxon>
        <taxon>Pseudomonadota</taxon>
        <taxon>Gammaproteobacteria</taxon>
        <taxon>Vibrionales</taxon>
        <taxon>Vibrionaceae</taxon>
        <taxon>Vibrio</taxon>
    </lineage>
</organism>
<gene>
    <name evidence="1" type="primary">rplE</name>
    <name type="ordered locus">VV1_0749</name>
    <name type="ORF">VV1_0748</name>
</gene>
<proteinExistence type="inferred from homology"/>
<dbReference type="EMBL" id="AE016795">
    <property type="protein sequence ID" value="AAO09258.2"/>
    <property type="molecule type" value="Genomic_DNA"/>
</dbReference>
<dbReference type="RefSeq" id="WP_011078821.1">
    <property type="nucleotide sequence ID" value="NC_004459.3"/>
</dbReference>
<dbReference type="SMR" id="Q8DE51"/>
<dbReference type="GeneID" id="93895054"/>
<dbReference type="KEGG" id="vvu:VV1_0749"/>
<dbReference type="HOGENOM" id="CLU_061015_2_1_6"/>
<dbReference type="Proteomes" id="UP000002275">
    <property type="component" value="Chromosome 1"/>
</dbReference>
<dbReference type="GO" id="GO:1990904">
    <property type="term" value="C:ribonucleoprotein complex"/>
    <property type="evidence" value="ECO:0007669"/>
    <property type="project" value="UniProtKB-KW"/>
</dbReference>
<dbReference type="GO" id="GO:0005840">
    <property type="term" value="C:ribosome"/>
    <property type="evidence" value="ECO:0007669"/>
    <property type="project" value="UniProtKB-KW"/>
</dbReference>
<dbReference type="GO" id="GO:0019843">
    <property type="term" value="F:rRNA binding"/>
    <property type="evidence" value="ECO:0007669"/>
    <property type="project" value="UniProtKB-UniRule"/>
</dbReference>
<dbReference type="GO" id="GO:0003735">
    <property type="term" value="F:structural constituent of ribosome"/>
    <property type="evidence" value="ECO:0007669"/>
    <property type="project" value="InterPro"/>
</dbReference>
<dbReference type="GO" id="GO:0000049">
    <property type="term" value="F:tRNA binding"/>
    <property type="evidence" value="ECO:0007669"/>
    <property type="project" value="UniProtKB-UniRule"/>
</dbReference>
<dbReference type="GO" id="GO:0006412">
    <property type="term" value="P:translation"/>
    <property type="evidence" value="ECO:0007669"/>
    <property type="project" value="UniProtKB-UniRule"/>
</dbReference>
<dbReference type="FunFam" id="3.30.1440.10:FF:000001">
    <property type="entry name" value="50S ribosomal protein L5"/>
    <property type="match status" value="1"/>
</dbReference>
<dbReference type="Gene3D" id="3.30.1440.10">
    <property type="match status" value="1"/>
</dbReference>
<dbReference type="HAMAP" id="MF_01333_B">
    <property type="entry name" value="Ribosomal_uL5_B"/>
    <property type="match status" value="1"/>
</dbReference>
<dbReference type="InterPro" id="IPR002132">
    <property type="entry name" value="Ribosomal_uL5"/>
</dbReference>
<dbReference type="InterPro" id="IPR020930">
    <property type="entry name" value="Ribosomal_uL5_bac-type"/>
</dbReference>
<dbReference type="InterPro" id="IPR031309">
    <property type="entry name" value="Ribosomal_uL5_C"/>
</dbReference>
<dbReference type="InterPro" id="IPR020929">
    <property type="entry name" value="Ribosomal_uL5_CS"/>
</dbReference>
<dbReference type="InterPro" id="IPR022803">
    <property type="entry name" value="Ribosomal_uL5_dom_sf"/>
</dbReference>
<dbReference type="InterPro" id="IPR031310">
    <property type="entry name" value="Ribosomal_uL5_N"/>
</dbReference>
<dbReference type="NCBIfam" id="NF000585">
    <property type="entry name" value="PRK00010.1"/>
    <property type="match status" value="1"/>
</dbReference>
<dbReference type="PANTHER" id="PTHR11994">
    <property type="entry name" value="60S RIBOSOMAL PROTEIN L11-RELATED"/>
    <property type="match status" value="1"/>
</dbReference>
<dbReference type="Pfam" id="PF00281">
    <property type="entry name" value="Ribosomal_L5"/>
    <property type="match status" value="1"/>
</dbReference>
<dbReference type="Pfam" id="PF00673">
    <property type="entry name" value="Ribosomal_L5_C"/>
    <property type="match status" value="1"/>
</dbReference>
<dbReference type="PIRSF" id="PIRSF002161">
    <property type="entry name" value="Ribosomal_L5"/>
    <property type="match status" value="1"/>
</dbReference>
<dbReference type="SUPFAM" id="SSF55282">
    <property type="entry name" value="RL5-like"/>
    <property type="match status" value="1"/>
</dbReference>
<dbReference type="PROSITE" id="PS00358">
    <property type="entry name" value="RIBOSOMAL_L5"/>
    <property type="match status" value="1"/>
</dbReference>
<accession>Q8DE51</accession>
<accession>Q8DE52</accession>